<protein>
    <recommendedName>
        <fullName evidence="1">Holo-[acyl-carrier-protein] synthase</fullName>
        <shortName evidence="1">Holo-ACP synthase</shortName>
        <ecNumber evidence="1">2.7.8.7</ecNumber>
    </recommendedName>
    <alternativeName>
        <fullName evidence="1">4'-phosphopantetheinyl transferase AcpS</fullName>
    </alternativeName>
</protein>
<evidence type="ECO:0000255" key="1">
    <source>
        <dbReference type="HAMAP-Rule" id="MF_00101"/>
    </source>
</evidence>
<gene>
    <name evidence="1" type="primary">acpS</name>
    <name type="ordered locus">SCH_2572</name>
</gene>
<keyword id="KW-0963">Cytoplasm</keyword>
<keyword id="KW-0275">Fatty acid biosynthesis</keyword>
<keyword id="KW-0276">Fatty acid metabolism</keyword>
<keyword id="KW-0444">Lipid biosynthesis</keyword>
<keyword id="KW-0443">Lipid metabolism</keyword>
<keyword id="KW-0460">Magnesium</keyword>
<keyword id="KW-0479">Metal-binding</keyword>
<keyword id="KW-0808">Transferase</keyword>
<comment type="function">
    <text evidence="1">Transfers the 4'-phosphopantetheine moiety from coenzyme A to a Ser of acyl-carrier-protein.</text>
</comment>
<comment type="catalytic activity">
    <reaction evidence="1">
        <text>apo-[ACP] + CoA = holo-[ACP] + adenosine 3',5'-bisphosphate + H(+)</text>
        <dbReference type="Rhea" id="RHEA:12068"/>
        <dbReference type="Rhea" id="RHEA-COMP:9685"/>
        <dbReference type="Rhea" id="RHEA-COMP:9690"/>
        <dbReference type="ChEBI" id="CHEBI:15378"/>
        <dbReference type="ChEBI" id="CHEBI:29999"/>
        <dbReference type="ChEBI" id="CHEBI:57287"/>
        <dbReference type="ChEBI" id="CHEBI:58343"/>
        <dbReference type="ChEBI" id="CHEBI:64479"/>
        <dbReference type="EC" id="2.7.8.7"/>
    </reaction>
</comment>
<comment type="cofactor">
    <cofactor evidence="1">
        <name>Mg(2+)</name>
        <dbReference type="ChEBI" id="CHEBI:18420"/>
    </cofactor>
</comment>
<comment type="subcellular location">
    <subcellularLocation>
        <location evidence="1">Cytoplasm</location>
    </subcellularLocation>
</comment>
<comment type="similarity">
    <text evidence="1">Belongs to the P-Pant transferase superfamily. AcpS family.</text>
</comment>
<sequence>MAILGLGTDIVEIARIEAVISRSGERLARRVLSDNEWAIWESHQQPVRFLAKRFAVKEAAAKAFGTGIRNGLAFNQFEVFNDELGKPRLRLWGEALTLAEKLGVAHMHVTLADERHYACATVILES</sequence>
<reference key="1">
    <citation type="journal article" date="2005" name="Nucleic Acids Res.">
        <title>The genome sequence of Salmonella enterica serovar Choleraesuis, a highly invasive and resistant zoonotic pathogen.</title>
        <authorList>
            <person name="Chiu C.-H."/>
            <person name="Tang P."/>
            <person name="Chu C."/>
            <person name="Hu S."/>
            <person name="Bao Q."/>
            <person name="Yu J."/>
            <person name="Chou Y.-Y."/>
            <person name="Wang H.-S."/>
            <person name="Lee Y.-S."/>
        </authorList>
    </citation>
    <scope>NUCLEOTIDE SEQUENCE [LARGE SCALE GENOMIC DNA]</scope>
    <source>
        <strain>SC-B67</strain>
    </source>
</reference>
<name>ACPS_SALCH</name>
<feature type="chain" id="PRO_0000228301" description="Holo-[acyl-carrier-protein] synthase">
    <location>
        <begin position="1"/>
        <end position="126"/>
    </location>
</feature>
<feature type="binding site" evidence="1">
    <location>
        <position position="9"/>
    </location>
    <ligand>
        <name>Mg(2+)</name>
        <dbReference type="ChEBI" id="CHEBI:18420"/>
    </ligand>
</feature>
<feature type="binding site" evidence="1">
    <location>
        <position position="58"/>
    </location>
    <ligand>
        <name>Mg(2+)</name>
        <dbReference type="ChEBI" id="CHEBI:18420"/>
    </ligand>
</feature>
<proteinExistence type="inferred from homology"/>
<organism>
    <name type="scientific">Salmonella choleraesuis (strain SC-B67)</name>
    <dbReference type="NCBI Taxonomy" id="321314"/>
    <lineage>
        <taxon>Bacteria</taxon>
        <taxon>Pseudomonadati</taxon>
        <taxon>Pseudomonadota</taxon>
        <taxon>Gammaproteobacteria</taxon>
        <taxon>Enterobacterales</taxon>
        <taxon>Enterobacteriaceae</taxon>
        <taxon>Salmonella</taxon>
    </lineage>
</organism>
<dbReference type="EC" id="2.7.8.7" evidence="1"/>
<dbReference type="EMBL" id="AE017220">
    <property type="protein sequence ID" value="AAX66478.1"/>
    <property type="molecule type" value="Genomic_DNA"/>
</dbReference>
<dbReference type="RefSeq" id="WP_000986041.1">
    <property type="nucleotide sequence ID" value="NC_006905.1"/>
</dbReference>
<dbReference type="SMR" id="Q57LD4"/>
<dbReference type="KEGG" id="sec:SCH_2572"/>
<dbReference type="HOGENOM" id="CLU_089696_3_1_6"/>
<dbReference type="Proteomes" id="UP000000538">
    <property type="component" value="Chromosome"/>
</dbReference>
<dbReference type="GO" id="GO:0005737">
    <property type="term" value="C:cytoplasm"/>
    <property type="evidence" value="ECO:0007669"/>
    <property type="project" value="UniProtKB-SubCell"/>
</dbReference>
<dbReference type="GO" id="GO:0008897">
    <property type="term" value="F:holo-[acyl-carrier-protein] synthase activity"/>
    <property type="evidence" value="ECO:0007669"/>
    <property type="project" value="UniProtKB-UniRule"/>
</dbReference>
<dbReference type="GO" id="GO:0000287">
    <property type="term" value="F:magnesium ion binding"/>
    <property type="evidence" value="ECO:0007669"/>
    <property type="project" value="UniProtKB-UniRule"/>
</dbReference>
<dbReference type="GO" id="GO:0006633">
    <property type="term" value="P:fatty acid biosynthetic process"/>
    <property type="evidence" value="ECO:0007669"/>
    <property type="project" value="UniProtKB-UniRule"/>
</dbReference>
<dbReference type="FunFam" id="3.90.470.20:FF:000001">
    <property type="entry name" value="Holo-[acyl-carrier-protein] synthase"/>
    <property type="match status" value="1"/>
</dbReference>
<dbReference type="Gene3D" id="3.90.470.20">
    <property type="entry name" value="4'-phosphopantetheinyl transferase domain"/>
    <property type="match status" value="1"/>
</dbReference>
<dbReference type="HAMAP" id="MF_00101">
    <property type="entry name" value="AcpS"/>
    <property type="match status" value="1"/>
</dbReference>
<dbReference type="InterPro" id="IPR008278">
    <property type="entry name" value="4-PPantetheinyl_Trfase_dom"/>
</dbReference>
<dbReference type="InterPro" id="IPR037143">
    <property type="entry name" value="4-PPantetheinyl_Trfase_dom_sf"/>
</dbReference>
<dbReference type="InterPro" id="IPR002582">
    <property type="entry name" value="ACPS"/>
</dbReference>
<dbReference type="InterPro" id="IPR004568">
    <property type="entry name" value="Ppantetheine-prot_Trfase_dom"/>
</dbReference>
<dbReference type="NCBIfam" id="TIGR00516">
    <property type="entry name" value="acpS"/>
    <property type="match status" value="1"/>
</dbReference>
<dbReference type="NCBIfam" id="TIGR00556">
    <property type="entry name" value="pantethn_trn"/>
    <property type="match status" value="1"/>
</dbReference>
<dbReference type="Pfam" id="PF01648">
    <property type="entry name" value="ACPS"/>
    <property type="match status" value="1"/>
</dbReference>
<dbReference type="SUPFAM" id="SSF56214">
    <property type="entry name" value="4'-phosphopantetheinyl transferase"/>
    <property type="match status" value="1"/>
</dbReference>
<accession>Q57LD4</accession>